<proteinExistence type="evidence at protein level"/>
<protein>
    <recommendedName>
        <fullName evidence="12">Stimulator of interferon genes protein homolog</fullName>
        <shortName evidence="11">dSTING</shortName>
        <shortName evidence="10">dmSTING</shortName>
    </recommendedName>
</protein>
<reference key="1">
    <citation type="journal article" date="2000" name="Science">
        <title>The genome sequence of Drosophila melanogaster.</title>
        <authorList>
            <person name="Adams M.D."/>
            <person name="Celniker S.E."/>
            <person name="Holt R.A."/>
            <person name="Evans C.A."/>
            <person name="Gocayne J.D."/>
            <person name="Amanatides P.G."/>
            <person name="Scherer S.E."/>
            <person name="Li P.W."/>
            <person name="Hoskins R.A."/>
            <person name="Galle R.F."/>
            <person name="George R.A."/>
            <person name="Lewis S.E."/>
            <person name="Richards S."/>
            <person name="Ashburner M."/>
            <person name="Henderson S.N."/>
            <person name="Sutton G.G."/>
            <person name="Wortman J.R."/>
            <person name="Yandell M.D."/>
            <person name="Zhang Q."/>
            <person name="Chen L.X."/>
            <person name="Brandon R.C."/>
            <person name="Rogers Y.-H.C."/>
            <person name="Blazej R.G."/>
            <person name="Champe M."/>
            <person name="Pfeiffer B.D."/>
            <person name="Wan K.H."/>
            <person name="Doyle C."/>
            <person name="Baxter E.G."/>
            <person name="Helt G."/>
            <person name="Nelson C.R."/>
            <person name="Miklos G.L.G."/>
            <person name="Abril J.F."/>
            <person name="Agbayani A."/>
            <person name="An H.-J."/>
            <person name="Andrews-Pfannkoch C."/>
            <person name="Baldwin D."/>
            <person name="Ballew R.M."/>
            <person name="Basu A."/>
            <person name="Baxendale J."/>
            <person name="Bayraktaroglu L."/>
            <person name="Beasley E.M."/>
            <person name="Beeson K.Y."/>
            <person name="Benos P.V."/>
            <person name="Berman B.P."/>
            <person name="Bhandari D."/>
            <person name="Bolshakov S."/>
            <person name="Borkova D."/>
            <person name="Botchan M.R."/>
            <person name="Bouck J."/>
            <person name="Brokstein P."/>
            <person name="Brottier P."/>
            <person name="Burtis K.C."/>
            <person name="Busam D.A."/>
            <person name="Butler H."/>
            <person name="Cadieu E."/>
            <person name="Center A."/>
            <person name="Chandra I."/>
            <person name="Cherry J.M."/>
            <person name="Cawley S."/>
            <person name="Dahlke C."/>
            <person name="Davenport L.B."/>
            <person name="Davies P."/>
            <person name="de Pablos B."/>
            <person name="Delcher A."/>
            <person name="Deng Z."/>
            <person name="Mays A.D."/>
            <person name="Dew I."/>
            <person name="Dietz S.M."/>
            <person name="Dodson K."/>
            <person name="Doup L.E."/>
            <person name="Downes M."/>
            <person name="Dugan-Rocha S."/>
            <person name="Dunkov B.C."/>
            <person name="Dunn P."/>
            <person name="Durbin K.J."/>
            <person name="Evangelista C.C."/>
            <person name="Ferraz C."/>
            <person name="Ferriera S."/>
            <person name="Fleischmann W."/>
            <person name="Fosler C."/>
            <person name="Gabrielian A.E."/>
            <person name="Garg N.S."/>
            <person name="Gelbart W.M."/>
            <person name="Glasser K."/>
            <person name="Glodek A."/>
            <person name="Gong F."/>
            <person name="Gorrell J.H."/>
            <person name="Gu Z."/>
            <person name="Guan P."/>
            <person name="Harris M."/>
            <person name="Harris N.L."/>
            <person name="Harvey D.A."/>
            <person name="Heiman T.J."/>
            <person name="Hernandez J.R."/>
            <person name="Houck J."/>
            <person name="Hostin D."/>
            <person name="Houston K.A."/>
            <person name="Howland T.J."/>
            <person name="Wei M.-H."/>
            <person name="Ibegwam C."/>
            <person name="Jalali M."/>
            <person name="Kalush F."/>
            <person name="Karpen G.H."/>
            <person name="Ke Z."/>
            <person name="Kennison J.A."/>
            <person name="Ketchum K.A."/>
            <person name="Kimmel B.E."/>
            <person name="Kodira C.D."/>
            <person name="Kraft C.L."/>
            <person name="Kravitz S."/>
            <person name="Kulp D."/>
            <person name="Lai Z."/>
            <person name="Lasko P."/>
            <person name="Lei Y."/>
            <person name="Levitsky A.A."/>
            <person name="Li J.H."/>
            <person name="Li Z."/>
            <person name="Liang Y."/>
            <person name="Lin X."/>
            <person name="Liu X."/>
            <person name="Mattei B."/>
            <person name="McIntosh T.C."/>
            <person name="McLeod M.P."/>
            <person name="McPherson D."/>
            <person name="Merkulov G."/>
            <person name="Milshina N.V."/>
            <person name="Mobarry C."/>
            <person name="Morris J."/>
            <person name="Moshrefi A."/>
            <person name="Mount S.M."/>
            <person name="Moy M."/>
            <person name="Murphy B."/>
            <person name="Murphy L."/>
            <person name="Muzny D.M."/>
            <person name="Nelson D.L."/>
            <person name="Nelson D.R."/>
            <person name="Nelson K.A."/>
            <person name="Nixon K."/>
            <person name="Nusskern D.R."/>
            <person name="Pacleb J.M."/>
            <person name="Palazzolo M."/>
            <person name="Pittman G.S."/>
            <person name="Pan S."/>
            <person name="Pollard J."/>
            <person name="Puri V."/>
            <person name="Reese M.G."/>
            <person name="Reinert K."/>
            <person name="Remington K."/>
            <person name="Saunders R.D.C."/>
            <person name="Scheeler F."/>
            <person name="Shen H."/>
            <person name="Shue B.C."/>
            <person name="Siden-Kiamos I."/>
            <person name="Simpson M."/>
            <person name="Skupski M.P."/>
            <person name="Smith T.J."/>
            <person name="Spier E."/>
            <person name="Spradling A.C."/>
            <person name="Stapleton M."/>
            <person name="Strong R."/>
            <person name="Sun E."/>
            <person name="Svirskas R."/>
            <person name="Tector C."/>
            <person name="Turner R."/>
            <person name="Venter E."/>
            <person name="Wang A.H."/>
            <person name="Wang X."/>
            <person name="Wang Z.-Y."/>
            <person name="Wassarman D.A."/>
            <person name="Weinstock G.M."/>
            <person name="Weissenbach J."/>
            <person name="Williams S.M."/>
            <person name="Woodage T."/>
            <person name="Worley K.C."/>
            <person name="Wu D."/>
            <person name="Yang S."/>
            <person name="Yao Q.A."/>
            <person name="Ye J."/>
            <person name="Yeh R.-F."/>
            <person name="Zaveri J.S."/>
            <person name="Zhan M."/>
            <person name="Zhang G."/>
            <person name="Zhao Q."/>
            <person name="Zheng L."/>
            <person name="Zheng X.H."/>
            <person name="Zhong F.N."/>
            <person name="Zhong W."/>
            <person name="Zhou X."/>
            <person name="Zhu S.C."/>
            <person name="Zhu X."/>
            <person name="Smith H.O."/>
            <person name="Gibbs R.A."/>
            <person name="Myers E.W."/>
            <person name="Rubin G.M."/>
            <person name="Venter J.C."/>
        </authorList>
    </citation>
    <scope>NUCLEOTIDE SEQUENCE [LARGE SCALE GENOMIC DNA]</scope>
    <source>
        <strain>Berkeley</strain>
    </source>
</reference>
<reference key="2">
    <citation type="journal article" date="2002" name="Genome Biol.">
        <title>Annotation of the Drosophila melanogaster euchromatic genome: a systematic review.</title>
        <authorList>
            <person name="Misra S."/>
            <person name="Crosby M.A."/>
            <person name="Mungall C.J."/>
            <person name="Matthews B.B."/>
            <person name="Campbell K.S."/>
            <person name="Hradecky P."/>
            <person name="Huang Y."/>
            <person name="Kaminker J.S."/>
            <person name="Millburn G.H."/>
            <person name="Prochnik S.E."/>
            <person name="Smith C.D."/>
            <person name="Tupy J.L."/>
            <person name="Whitfield E.J."/>
            <person name="Bayraktaroglu L."/>
            <person name="Berman B.P."/>
            <person name="Bettencourt B.R."/>
            <person name="Celniker S.E."/>
            <person name="de Grey A.D.N.J."/>
            <person name="Drysdale R.A."/>
            <person name="Harris N.L."/>
            <person name="Richter J."/>
            <person name="Russo S."/>
            <person name="Schroeder A.J."/>
            <person name="Shu S.Q."/>
            <person name="Stapleton M."/>
            <person name="Yamada C."/>
            <person name="Ashburner M."/>
            <person name="Gelbart W.M."/>
            <person name="Rubin G.M."/>
            <person name="Lewis S.E."/>
        </authorList>
    </citation>
    <scope>GENOME REANNOTATION</scope>
    <source>
        <strain>Berkeley</strain>
    </source>
</reference>
<reference key="3">
    <citation type="submission" date="2004-08" db="EMBL/GenBank/DDBJ databases">
        <authorList>
            <person name="Stapleton M."/>
            <person name="Carlson J."/>
            <person name="Chavez C."/>
            <person name="Frise E."/>
            <person name="George R."/>
            <person name="Pacleb J."/>
            <person name="Park S."/>
            <person name="Wan K."/>
            <person name="Yu C."/>
            <person name="Rubin G.M."/>
            <person name="Celniker S."/>
        </authorList>
    </citation>
    <scope>NUCLEOTIDE SEQUENCE [LARGE SCALE MRNA]</scope>
    <source>
        <strain>Berkeley</strain>
        <tissue>Larva</tissue>
        <tissue>Pupae</tissue>
    </source>
</reference>
<reference key="4">
    <citation type="journal article" date="2018" name="Cell Host Microbe">
        <title>Inflammation-induced, STING-dependent autophagy restricts Zika virus infection in the Drosophila brain.</title>
        <authorList>
            <person name="Liu Y."/>
            <person name="Gordesky-Gold B."/>
            <person name="Leney-Greene M."/>
            <person name="Weinbren N.L."/>
            <person name="Tudor M."/>
            <person name="Cherry S."/>
        </authorList>
    </citation>
    <scope>FUNCTION</scope>
</reference>
<reference key="5">
    <citation type="journal article" date="2018" name="Cell Rep.">
        <title>Analysis of Drosophila STING reveals an evolutionarily conserved antimicrobial function.</title>
        <authorList>
            <person name="Martin M."/>
            <person name="Hiroyasu A."/>
            <person name="Guzman R.M."/>
            <person name="Roberts S.A."/>
            <person name="Goodman A.G."/>
        </authorList>
    </citation>
    <scope>FUNCTION</scope>
</reference>
<reference key="6">
    <citation type="journal article" date="2018" name="Immunity">
        <title>The kinase IKKbeta regulates a STING- and NF-kappaB-dependent antiviral response pathway in Drosophila.</title>
        <authorList>
            <person name="Goto A."/>
            <person name="Okado K."/>
            <person name="Martins N."/>
            <person name="Cai H."/>
            <person name="Barbier V."/>
            <person name="Lamiable O."/>
            <person name="Troxler L."/>
            <person name="Santiago E."/>
            <person name="Kuhn L."/>
            <person name="Paik D."/>
            <person name="Silverman N."/>
            <person name="Holleufer A."/>
            <person name="Hartmann R."/>
            <person name="Liu J."/>
            <person name="Peng T."/>
            <person name="Hoffmann J.A."/>
            <person name="Meignin C."/>
            <person name="Daeffler L."/>
            <person name="Imler J.L."/>
        </authorList>
    </citation>
    <scope>FUNCTION</scope>
    <scope>SUBCELLULAR LOCATION</scope>
    <scope>INDUCTION</scope>
</reference>
<reference key="7">
    <citation type="journal article" date="2020" name="Sci. Signal.">
        <title>2'3'-cGAMP triggers a STING- and NF-kappaB-dependent broad antiviral response in Drosophila.</title>
        <authorList>
            <person name="Cai H."/>
            <person name="Holleufer A."/>
            <person name="Simonsen B."/>
            <person name="Schneider J."/>
            <person name="Lemoine A."/>
            <person name="Gad H.H."/>
            <person name="Huang J."/>
            <person name="Huang J."/>
            <person name="Chen D."/>
            <person name="Peng T."/>
            <person name="Marques J.T."/>
            <person name="Hartmann R."/>
            <person name="Martins N.E."/>
            <person name="Imler J.L."/>
        </authorList>
    </citation>
    <scope>FUNCTION</scope>
</reference>
<reference key="8">
    <citation type="journal article" date="2021" name="Nature">
        <title>cGAS-like receptors sense RNA and control 3'2'-cGAMP signaling in Drosophila.</title>
        <authorList>
            <person name="Slavik K.M."/>
            <person name="Morehouse B.R."/>
            <person name="Ragucci A.E."/>
            <person name="Zhou W."/>
            <person name="Ai X."/>
            <person name="Chen Y."/>
            <person name="Li L."/>
            <person name="Wei Z."/>
            <person name="Baehre H."/>
            <person name="Koenig M."/>
            <person name="Seifert R."/>
            <person name="Lee A.S.Y."/>
            <person name="Cai H."/>
            <person name="Imler J.L."/>
            <person name="Kranzusch P.J."/>
        </authorList>
    </citation>
    <scope>FUNCTION</scope>
    <scope>3',2'-CGAMP-BINDING</scope>
</reference>
<reference key="9">
    <citation type="journal article" date="2021" name="Nature">
        <title>Two cGAS-like receptors induce antiviral immunity in Drosophila.</title>
        <authorList>
            <person name="Holleufer A."/>
            <person name="Winther K.G."/>
            <person name="Gad H.H."/>
            <person name="Ai X."/>
            <person name="Chen Y."/>
            <person name="Li L."/>
            <person name="Wei Z."/>
            <person name="Deng H."/>
            <person name="Liu J."/>
            <person name="Frederiksen N.A."/>
            <person name="Simonsen B."/>
            <person name="Andersen L.L."/>
            <person name="Kleigrewe K."/>
            <person name="Dalskov L."/>
            <person name="Pichlmair A."/>
            <person name="Cai H."/>
            <person name="Imler J.L."/>
            <person name="Hartmann R."/>
        </authorList>
    </citation>
    <scope>FUNCTION</scope>
    <scope>INDUCTION</scope>
</reference>
<evidence type="ECO:0000250" key="1">
    <source>
        <dbReference type="UniProtKB" id="P0DV10"/>
    </source>
</evidence>
<evidence type="ECO:0000255" key="2"/>
<evidence type="ECO:0000255" key="3">
    <source>
        <dbReference type="PROSITE-ProRule" id="PRU00498"/>
    </source>
</evidence>
<evidence type="ECO:0000269" key="4">
    <source>
    </source>
</evidence>
<evidence type="ECO:0000269" key="5">
    <source>
    </source>
</evidence>
<evidence type="ECO:0000269" key="6">
    <source>
    </source>
</evidence>
<evidence type="ECO:0000269" key="7">
    <source>
    </source>
</evidence>
<evidence type="ECO:0000269" key="8">
    <source>
    </source>
</evidence>
<evidence type="ECO:0000269" key="9">
    <source>
    </source>
</evidence>
<evidence type="ECO:0000303" key="10">
    <source>
    </source>
</evidence>
<evidence type="ECO:0000303" key="11">
    <source>
    </source>
</evidence>
<evidence type="ECO:0000305" key="12"/>
<evidence type="ECO:0000312" key="13">
    <source>
        <dbReference type="FlyBase" id="FBgn0033453"/>
    </source>
</evidence>
<organism>
    <name type="scientific">Drosophila melanogaster</name>
    <name type="common">Fruit fly</name>
    <dbReference type="NCBI Taxonomy" id="7227"/>
    <lineage>
        <taxon>Eukaryota</taxon>
        <taxon>Metazoa</taxon>
        <taxon>Ecdysozoa</taxon>
        <taxon>Arthropoda</taxon>
        <taxon>Hexapoda</taxon>
        <taxon>Insecta</taxon>
        <taxon>Pterygota</taxon>
        <taxon>Neoptera</taxon>
        <taxon>Endopterygota</taxon>
        <taxon>Diptera</taxon>
        <taxon>Brachycera</taxon>
        <taxon>Muscomorpha</taxon>
        <taxon>Ephydroidea</taxon>
        <taxon>Drosophilidae</taxon>
        <taxon>Drosophila</taxon>
        <taxon>Sophophora</taxon>
    </lineage>
</organism>
<comment type="function">
    <text evidence="4 5 6 7 8 9">Facilitator of innate immune signaling that binds cyclic dinucleotides produced in response to infection by bacteria and/or viruses, and promotes the activation of the NF-kappa-B transcription factor Rel (Relish) (PubMed:29924997, PubMed:29934091, PubMed:30119996, PubMed:33262294, PubMed:34261127, PubMed:34261128). Recognizes and binds cyclic di-GMP (c-di-GMP), a cyclic dinucleotide messenger produced by bacteria such as L.monocytogenes, leading to activation of the peptidoglycan recognition protein (IMD) signaling pathway and activation of Rel (Relish) (PubMed:29924997). Innate immune response is triggered in response to double-stranded RNA from viruses delivered to the cytoplasm: Sting acts by specifically binding cyclic dinucleotides 3',2'-cGAMP and 2',3'-cGAMP produced by cGlr1 and cGlr2 in response to RNA virus in the cytosol (PubMed:34261127, PubMed:34261128). Has a strong preference for 3',2'-cGAMP compared to other cyclic dinucleotides such as 2',3'-cGAMP or 3'3'-c-di-GMP (PubMed:34261127). Upon binding to 3',2'-cGAMP, activates an antiviral immune response, leading to the activation of Rel (Relish) (PubMed:34261127, PubMed:34261128). Activated in brain in response to Zika virus infection, leading to autophagy (PubMed:29934091).</text>
</comment>
<comment type="subcellular location">
    <subcellularLocation>
        <location evidence="6">Endoplasmic reticulum membrane</location>
        <topology evidence="2">Multi-pass membrane protein</topology>
    </subcellularLocation>
</comment>
<comment type="induction">
    <text evidence="6 9">Expression is directly activated by Rel (Relish).</text>
</comment>
<comment type="similarity">
    <text evidence="12">Belongs to the STING family.</text>
</comment>
<comment type="sequence caution" evidence="12">
    <conflict type="erroneous initiation">
        <sequence resource="EMBL-CDS" id="AAT94483"/>
    </conflict>
    <text>Extended N-terminus.</text>
</comment>
<gene>
    <name evidence="13" type="primary">Sting</name>
    <name evidence="13" type="ORF">CG1667</name>
</gene>
<keyword id="KW-0051">Antiviral defense</keyword>
<keyword id="KW-0256">Endoplasmic reticulum</keyword>
<keyword id="KW-0325">Glycoprotein</keyword>
<keyword id="KW-0391">Immunity</keyword>
<keyword id="KW-0399">Innate immunity</keyword>
<keyword id="KW-0472">Membrane</keyword>
<keyword id="KW-0547">Nucleotide-binding</keyword>
<keyword id="KW-1185">Reference proteome</keyword>
<keyword id="KW-0812">Transmembrane</keyword>
<keyword id="KW-1133">Transmembrane helix</keyword>
<name>STING_DROME</name>
<sequence>MAIASNVVEAGNAVRAEKGRKYFYFRKMIGDYIDTSIRIVATVFLADLLLRLYRCVVEYGSNGRYYLPEDRLWIILRRSCTYNNRSIYLIVGFLLVAFFRISVTGNYRNVMPTTLFLFQMPLYWIWSFTDMDQSTLSYSHWIRDSHGLDYAAGMASNYFHGYLKLSLPERKDDGLKHRLAMYEDKNNVTFGIKRLVILIPDEMFVNGVLESHLLDKAEPLETQFINRAGVYRPFKHDVYRMNKKVNGRTYYFAVEGATPMISFFDATYSNLSGTWQMQELKREIWIKFYKHLKELITTWPETRDLVELIIYNSHDSKGNLVDVGELLVAHMQNKTKTIDEISN</sequence>
<dbReference type="EMBL" id="AE013599">
    <property type="protein sequence ID" value="AAF58891.3"/>
    <property type="molecule type" value="Genomic_DNA"/>
</dbReference>
<dbReference type="EMBL" id="AE013599">
    <property type="protein sequence ID" value="AHN56054.1"/>
    <property type="molecule type" value="Genomic_DNA"/>
</dbReference>
<dbReference type="EMBL" id="BT015254">
    <property type="protein sequence ID" value="AAT94483.1"/>
    <property type="status" value="ALT_INIT"/>
    <property type="molecule type" value="mRNA"/>
</dbReference>
<dbReference type="RefSeq" id="NP_001286256.1">
    <property type="nucleotide sequence ID" value="NM_001299327.1"/>
</dbReference>
<dbReference type="RefSeq" id="NP_610525.4">
    <property type="nucleotide sequence ID" value="NM_136681.5"/>
</dbReference>
<dbReference type="SMR" id="A0A0B4LFY9"/>
<dbReference type="FunCoup" id="A0A0B4LFY9">
    <property type="interactions" value="316"/>
</dbReference>
<dbReference type="IntAct" id="A0A0B4LFY9">
    <property type="interactions" value="2"/>
</dbReference>
<dbReference type="STRING" id="7227.FBpp0311271"/>
<dbReference type="GlyCosmos" id="A0A0B4LFY9">
    <property type="glycosylation" value="4 sites, No reported glycans"/>
</dbReference>
<dbReference type="GlyGen" id="A0A0B4LFY9">
    <property type="glycosylation" value="4 sites"/>
</dbReference>
<dbReference type="PaxDb" id="7227-FBpp0087563"/>
<dbReference type="DNASU" id="36016"/>
<dbReference type="EnsemblMetazoa" id="FBtr0345019">
    <property type="protein sequence ID" value="FBpp0311270"/>
    <property type="gene ID" value="FBgn0033453"/>
</dbReference>
<dbReference type="EnsemblMetazoa" id="FBtr0345020">
    <property type="protein sequence ID" value="FBpp0311271"/>
    <property type="gene ID" value="FBgn0033453"/>
</dbReference>
<dbReference type="GeneID" id="36016"/>
<dbReference type="KEGG" id="dme:Dmel_CG1667"/>
<dbReference type="AGR" id="FB:FBgn0033453"/>
<dbReference type="CTD" id="36016"/>
<dbReference type="FlyBase" id="FBgn0033453">
    <property type="gene designation" value="Sting"/>
</dbReference>
<dbReference type="VEuPathDB" id="VectorBase:FBgn0033453"/>
<dbReference type="eggNOG" id="ENOG502R15M">
    <property type="taxonomic scope" value="Eukaryota"/>
</dbReference>
<dbReference type="GeneTree" id="ENSGT00390000008582"/>
<dbReference type="HOGENOM" id="CLU_076442_0_0_1"/>
<dbReference type="InParanoid" id="A0A0B4LFY9"/>
<dbReference type="OMA" id="SATWQMK"/>
<dbReference type="OrthoDB" id="6053839at2759"/>
<dbReference type="PhylomeDB" id="A0A0B4LFY9"/>
<dbReference type="Reactome" id="R-DME-1834941">
    <property type="pathway name" value="STING mediated induction of host immune responses"/>
</dbReference>
<dbReference type="Reactome" id="R-DME-3134975">
    <property type="pathway name" value="Regulation of innate immune responses to cytosolic DNA"/>
</dbReference>
<dbReference type="Reactome" id="R-DME-3249367">
    <property type="pathway name" value="STAT6-mediated induction of chemokines"/>
</dbReference>
<dbReference type="Reactome" id="R-DME-6798695">
    <property type="pathway name" value="Neutrophil degranulation"/>
</dbReference>
<dbReference type="BioGRID-ORCS" id="36016">
    <property type="hits" value="0 hits in 1 CRISPR screen"/>
</dbReference>
<dbReference type="GenomeRNAi" id="36016"/>
<dbReference type="PRO" id="PR:A0A0B4LFY9"/>
<dbReference type="Proteomes" id="UP000000803">
    <property type="component" value="Chromosome 2R"/>
</dbReference>
<dbReference type="Bgee" id="FBgn0033453">
    <property type="expression patterns" value="Expressed in visual pigment cell (sensu Nematoda and Protostomia) in testis and 94 other cell types or tissues"/>
</dbReference>
<dbReference type="ExpressionAtlas" id="A0A0B4LFY9">
    <property type="expression patterns" value="baseline and differential"/>
</dbReference>
<dbReference type="GO" id="GO:0005776">
    <property type="term" value="C:autophagosome"/>
    <property type="evidence" value="ECO:0000318"/>
    <property type="project" value="GO_Central"/>
</dbReference>
<dbReference type="GO" id="GO:0005789">
    <property type="term" value="C:endoplasmic reticulum membrane"/>
    <property type="evidence" value="ECO:0000314"/>
    <property type="project" value="FlyBase"/>
</dbReference>
<dbReference type="GO" id="GO:0061507">
    <property type="term" value="F:2',3'-cyclic GMP-AMP binding"/>
    <property type="evidence" value="ECO:0000314"/>
    <property type="project" value="UniProt"/>
</dbReference>
<dbReference type="GO" id="GO:0140704">
    <property type="term" value="F:3',2'-cyclic GMP-AMP binding"/>
    <property type="evidence" value="ECO:0000314"/>
    <property type="project" value="FlyBase"/>
</dbReference>
<dbReference type="GO" id="GO:0035438">
    <property type="term" value="F:cyclic-di-GMP binding"/>
    <property type="evidence" value="ECO:0000314"/>
    <property type="project" value="FlyBase"/>
</dbReference>
<dbReference type="GO" id="GO:0140367">
    <property type="term" value="P:antibacterial innate immune response"/>
    <property type="evidence" value="ECO:0000315"/>
    <property type="project" value="FlyBase"/>
</dbReference>
<dbReference type="GO" id="GO:0140374">
    <property type="term" value="P:antiviral innate immune response"/>
    <property type="evidence" value="ECO:0000315"/>
    <property type="project" value="FlyBase"/>
</dbReference>
<dbReference type="GO" id="GO:0000045">
    <property type="term" value="P:autophagosome assembly"/>
    <property type="evidence" value="ECO:0000318"/>
    <property type="project" value="GO_Central"/>
</dbReference>
<dbReference type="GO" id="GO:0098586">
    <property type="term" value="P:cellular response to virus"/>
    <property type="evidence" value="ECO:0000314"/>
    <property type="project" value="FlyBase"/>
</dbReference>
<dbReference type="GO" id="GO:0140896">
    <property type="term" value="P:cGAS/STING signaling pathway"/>
    <property type="evidence" value="ECO:0000314"/>
    <property type="project" value="FlyBase"/>
</dbReference>
<dbReference type="GO" id="GO:0042742">
    <property type="term" value="P:defense response to bacterium"/>
    <property type="evidence" value="ECO:0000315"/>
    <property type="project" value="FlyBase"/>
</dbReference>
<dbReference type="GO" id="GO:0051607">
    <property type="term" value="P:defense response to virus"/>
    <property type="evidence" value="ECO:0000314"/>
    <property type="project" value="UniProtKB"/>
</dbReference>
<dbReference type="GO" id="GO:0045087">
    <property type="term" value="P:innate immune response"/>
    <property type="evidence" value="ECO:0000318"/>
    <property type="project" value="GO_Central"/>
</dbReference>
<dbReference type="GO" id="GO:0002807">
    <property type="term" value="P:positive regulation of antimicrobial peptide biosynthetic process"/>
    <property type="evidence" value="ECO:0000315"/>
    <property type="project" value="FlyBase"/>
</dbReference>
<dbReference type="GO" id="GO:0016239">
    <property type="term" value="P:positive regulation of macroautophagy"/>
    <property type="evidence" value="ECO:0000314"/>
    <property type="project" value="UniProtKB"/>
</dbReference>
<dbReference type="GO" id="GO:0032481">
    <property type="term" value="P:positive regulation of type I interferon production"/>
    <property type="evidence" value="ECO:0007669"/>
    <property type="project" value="InterPro"/>
</dbReference>
<dbReference type="GO" id="GO:0140460">
    <property type="term" value="P:response to Gram-negative bacterium"/>
    <property type="evidence" value="ECO:0000315"/>
    <property type="project" value="FlyBase"/>
</dbReference>
<dbReference type="GO" id="GO:0061709">
    <property type="term" value="P:reticulophagy"/>
    <property type="evidence" value="ECO:0000318"/>
    <property type="project" value="GO_Central"/>
</dbReference>
<dbReference type="CDD" id="cd12146">
    <property type="entry name" value="STING_C"/>
    <property type="match status" value="1"/>
</dbReference>
<dbReference type="Gene3D" id="3.40.50.12100">
    <property type="entry name" value="Stimulator of interferon genes protein"/>
    <property type="match status" value="1"/>
</dbReference>
<dbReference type="InterPro" id="IPR029158">
    <property type="entry name" value="STING"/>
</dbReference>
<dbReference type="InterPro" id="IPR033952">
    <property type="entry name" value="STING_C"/>
</dbReference>
<dbReference type="InterPro" id="IPR038623">
    <property type="entry name" value="STING_C_sf"/>
</dbReference>
<dbReference type="InterPro" id="IPR055432">
    <property type="entry name" value="STING_LBD"/>
</dbReference>
<dbReference type="InterPro" id="IPR055434">
    <property type="entry name" value="STING_TM"/>
</dbReference>
<dbReference type="PANTHER" id="PTHR34339">
    <property type="entry name" value="STIMULATOR OF INTERFERON GENES PROTEIN"/>
    <property type="match status" value="1"/>
</dbReference>
<dbReference type="PANTHER" id="PTHR34339:SF1">
    <property type="entry name" value="STIMULATOR OF INTERFERON GENES PROTEIN"/>
    <property type="match status" value="1"/>
</dbReference>
<dbReference type="Pfam" id="PF15009">
    <property type="entry name" value="STING_LBD"/>
    <property type="match status" value="1"/>
</dbReference>
<dbReference type="Pfam" id="PF23417">
    <property type="entry name" value="STING_TM"/>
    <property type="match status" value="1"/>
</dbReference>
<feature type="chain" id="PRO_0000454449" description="Stimulator of interferon genes protein homolog">
    <location>
        <begin position="1"/>
        <end position="343"/>
    </location>
</feature>
<feature type="transmembrane region" description="Helical" evidence="2">
    <location>
        <begin position="87"/>
        <end position="107"/>
    </location>
</feature>
<feature type="transmembrane region" description="Helical" evidence="2">
    <location>
        <begin position="109"/>
        <end position="129"/>
    </location>
</feature>
<feature type="transmembrane region" description="Helical" evidence="2">
    <location>
        <begin position="195"/>
        <end position="215"/>
    </location>
</feature>
<feature type="binding site" evidence="1">
    <location>
        <position position="157"/>
    </location>
    <ligand>
        <name>3',2'-cGAMP</name>
        <dbReference type="ChEBI" id="CHEBI:177334"/>
    </ligand>
</feature>
<feature type="binding site" evidence="1">
    <location>
        <position position="232"/>
    </location>
    <ligand>
        <name>3',2'-cGAMP</name>
        <dbReference type="ChEBI" id="CHEBI:177334"/>
    </ligand>
</feature>
<feature type="binding site" evidence="1">
    <location>
        <position position="235"/>
    </location>
    <ligand>
        <name>3',2'-cGAMP</name>
        <dbReference type="ChEBI" id="CHEBI:177334"/>
    </ligand>
</feature>
<feature type="binding site" evidence="1">
    <location>
        <position position="255"/>
    </location>
    <ligand>
        <name>3',2'-cGAMP</name>
        <dbReference type="ChEBI" id="CHEBI:177334"/>
    </ligand>
</feature>
<feature type="binding site" evidence="1">
    <location>
        <position position="258"/>
    </location>
    <ligand>
        <name>3',2'-cGAMP</name>
        <dbReference type="ChEBI" id="CHEBI:177334"/>
    </ligand>
</feature>
<feature type="binding site" evidence="1">
    <location>
        <position position="262"/>
    </location>
    <ligand>
        <name>3',2'-cGAMP</name>
        <dbReference type="ChEBI" id="CHEBI:177334"/>
    </ligand>
</feature>
<feature type="glycosylation site" description="N-linked (GlcNAc...) asparagine" evidence="3">
    <location>
        <position position="84"/>
    </location>
</feature>
<feature type="glycosylation site" description="N-linked (GlcNAc...) asparagine" evidence="3">
    <location>
        <position position="187"/>
    </location>
</feature>
<feature type="glycosylation site" description="N-linked (GlcNAc...) asparagine" evidence="3">
    <location>
        <position position="270"/>
    </location>
</feature>
<feature type="glycosylation site" description="N-linked (GlcNAc...) asparagine" evidence="3">
    <location>
        <position position="333"/>
    </location>
</feature>
<accession>A0A0B4LFY9</accession>
<accession>Q6AWJ4</accession>